<protein>
    <recommendedName>
        <fullName evidence="1">Pyridoxine/pyridoxamine 5'-phosphate oxidase</fullName>
        <ecNumber evidence="1">1.4.3.5</ecNumber>
    </recommendedName>
    <alternativeName>
        <fullName evidence="1">PNP/PMP oxidase</fullName>
        <shortName evidence="1">PNPOx</shortName>
    </alternativeName>
    <alternativeName>
        <fullName evidence="1">Pyridoxal 5'-phosphate synthase</fullName>
    </alternativeName>
</protein>
<gene>
    <name evidence="1" type="primary">pdxH</name>
    <name type="ordered locus">LIC_12520</name>
</gene>
<reference key="1">
    <citation type="journal article" date="2004" name="J. Bacteriol.">
        <title>Comparative genomics of two Leptospira interrogans serovars reveals novel insights into physiology and pathogenesis.</title>
        <authorList>
            <person name="Nascimento A.L.T.O."/>
            <person name="Ko A.I."/>
            <person name="Martins E.A.L."/>
            <person name="Monteiro-Vitorello C.B."/>
            <person name="Ho P.L."/>
            <person name="Haake D.A."/>
            <person name="Verjovski-Almeida S."/>
            <person name="Hartskeerl R.A."/>
            <person name="Marques M.V."/>
            <person name="Oliveira M.C."/>
            <person name="Menck C.F.M."/>
            <person name="Leite L.C.C."/>
            <person name="Carrer H."/>
            <person name="Coutinho L.L."/>
            <person name="Degrave W.M."/>
            <person name="Dellagostin O.A."/>
            <person name="El-Dorry H."/>
            <person name="Ferro E.S."/>
            <person name="Ferro M.I.T."/>
            <person name="Furlan L.R."/>
            <person name="Gamberini M."/>
            <person name="Giglioti E.A."/>
            <person name="Goes-Neto A."/>
            <person name="Goldman G.H."/>
            <person name="Goldman M.H.S."/>
            <person name="Harakava R."/>
            <person name="Jeronimo S.M.B."/>
            <person name="Junqueira-de-Azevedo I.L.M."/>
            <person name="Kimura E.T."/>
            <person name="Kuramae E.E."/>
            <person name="Lemos E.G.M."/>
            <person name="Lemos M.V.F."/>
            <person name="Marino C.L."/>
            <person name="Nunes L.R."/>
            <person name="de Oliveira R.C."/>
            <person name="Pereira G.G."/>
            <person name="Reis M.S."/>
            <person name="Schriefer A."/>
            <person name="Siqueira W.J."/>
            <person name="Sommer P."/>
            <person name="Tsai S.M."/>
            <person name="Simpson A.J.G."/>
            <person name="Ferro J.A."/>
            <person name="Camargo L.E.A."/>
            <person name="Kitajima J.P."/>
            <person name="Setubal J.C."/>
            <person name="Van Sluys M.A."/>
        </authorList>
    </citation>
    <scope>NUCLEOTIDE SEQUENCE [LARGE SCALE GENOMIC DNA]</scope>
    <source>
        <strain>Fiocruz L1-130</strain>
    </source>
</reference>
<organism>
    <name type="scientific">Leptospira interrogans serogroup Icterohaemorrhagiae serovar copenhageni (strain Fiocruz L1-130)</name>
    <dbReference type="NCBI Taxonomy" id="267671"/>
    <lineage>
        <taxon>Bacteria</taxon>
        <taxon>Pseudomonadati</taxon>
        <taxon>Spirochaetota</taxon>
        <taxon>Spirochaetia</taxon>
        <taxon>Leptospirales</taxon>
        <taxon>Leptospiraceae</taxon>
        <taxon>Leptospira</taxon>
    </lineage>
</organism>
<keyword id="KW-0285">Flavoprotein</keyword>
<keyword id="KW-0288">FMN</keyword>
<keyword id="KW-0560">Oxidoreductase</keyword>
<keyword id="KW-0664">Pyridoxine biosynthesis</keyword>
<sequence length="214" mass="25010">MDPKISEIRKSYTLSSLEIEDAGSDPVLFFQKWFEEAVQSEVLEVNAMTLATVTQDGKPDARIVLLKGILKESFLFYTNYESRKGTELETNPNVCLVFFWPELERQVRIEGNVTKVSREVSKEYFHSRPRESQIGALASPQSQKIPDRKFLEGRFQKFTNQYQNKEVDLPNHWGGYAVYPCRIEFWQGRSSRLHDRIVFERDTSSSWEKFRIAP</sequence>
<comment type="function">
    <text evidence="1">Catalyzes the oxidation of either pyridoxine 5'-phosphate (PNP) or pyridoxamine 5'-phosphate (PMP) into pyridoxal 5'-phosphate (PLP).</text>
</comment>
<comment type="catalytic activity">
    <reaction evidence="1">
        <text>pyridoxamine 5'-phosphate + O2 + H2O = pyridoxal 5'-phosphate + H2O2 + NH4(+)</text>
        <dbReference type="Rhea" id="RHEA:15817"/>
        <dbReference type="ChEBI" id="CHEBI:15377"/>
        <dbReference type="ChEBI" id="CHEBI:15379"/>
        <dbReference type="ChEBI" id="CHEBI:16240"/>
        <dbReference type="ChEBI" id="CHEBI:28938"/>
        <dbReference type="ChEBI" id="CHEBI:58451"/>
        <dbReference type="ChEBI" id="CHEBI:597326"/>
        <dbReference type="EC" id="1.4.3.5"/>
    </reaction>
</comment>
<comment type="catalytic activity">
    <reaction evidence="1">
        <text>pyridoxine 5'-phosphate + O2 = pyridoxal 5'-phosphate + H2O2</text>
        <dbReference type="Rhea" id="RHEA:15149"/>
        <dbReference type="ChEBI" id="CHEBI:15379"/>
        <dbReference type="ChEBI" id="CHEBI:16240"/>
        <dbReference type="ChEBI" id="CHEBI:58589"/>
        <dbReference type="ChEBI" id="CHEBI:597326"/>
        <dbReference type="EC" id="1.4.3.5"/>
    </reaction>
</comment>
<comment type="cofactor">
    <cofactor evidence="1">
        <name>FMN</name>
        <dbReference type="ChEBI" id="CHEBI:58210"/>
    </cofactor>
    <text evidence="1">Binds 1 FMN per subunit.</text>
</comment>
<comment type="pathway">
    <text evidence="1">Cofactor metabolism; pyridoxal 5'-phosphate salvage; pyridoxal 5'-phosphate from pyridoxamine 5'-phosphate: step 1/1.</text>
</comment>
<comment type="pathway">
    <text evidence="1">Cofactor metabolism; pyridoxal 5'-phosphate salvage; pyridoxal 5'-phosphate from pyridoxine 5'-phosphate: step 1/1.</text>
</comment>
<comment type="subunit">
    <text evidence="1">Homodimer.</text>
</comment>
<comment type="similarity">
    <text evidence="1">Belongs to the pyridoxamine 5'-phosphate oxidase family.</text>
</comment>
<name>PDXH_LEPIC</name>
<feature type="chain" id="PRO_0000167718" description="Pyridoxine/pyridoxamine 5'-phosphate oxidase">
    <location>
        <begin position="1"/>
        <end position="214"/>
    </location>
</feature>
<feature type="binding site" evidence="1">
    <location>
        <begin position="9"/>
        <end position="12"/>
    </location>
    <ligand>
        <name>substrate</name>
    </ligand>
</feature>
<feature type="binding site" evidence="1">
    <location>
        <begin position="62"/>
        <end position="67"/>
    </location>
    <ligand>
        <name>FMN</name>
        <dbReference type="ChEBI" id="CHEBI:58210"/>
    </ligand>
</feature>
<feature type="binding site" evidence="1">
    <location>
        <position position="67"/>
    </location>
    <ligand>
        <name>substrate</name>
    </ligand>
</feature>
<feature type="binding site" evidence="1">
    <location>
        <begin position="77"/>
        <end position="78"/>
    </location>
    <ligand>
        <name>FMN</name>
        <dbReference type="ChEBI" id="CHEBI:58210"/>
    </ligand>
</feature>
<feature type="binding site" evidence="1">
    <location>
        <position position="83"/>
    </location>
    <ligand>
        <name>FMN</name>
        <dbReference type="ChEBI" id="CHEBI:58210"/>
    </ligand>
</feature>
<feature type="binding site" evidence="1">
    <location>
        <position position="84"/>
    </location>
    <ligand>
        <name>FMN</name>
        <dbReference type="ChEBI" id="CHEBI:58210"/>
    </ligand>
</feature>
<feature type="binding site" evidence="1">
    <location>
        <position position="106"/>
    </location>
    <ligand>
        <name>FMN</name>
        <dbReference type="ChEBI" id="CHEBI:58210"/>
    </ligand>
</feature>
<feature type="binding site" evidence="1">
    <location>
        <position position="124"/>
    </location>
    <ligand>
        <name>substrate</name>
    </ligand>
</feature>
<feature type="binding site" evidence="1">
    <location>
        <position position="128"/>
    </location>
    <ligand>
        <name>substrate</name>
    </ligand>
</feature>
<feature type="binding site" evidence="1">
    <location>
        <position position="132"/>
    </location>
    <ligand>
        <name>substrate</name>
    </ligand>
</feature>
<feature type="binding site" evidence="1">
    <location>
        <begin position="141"/>
        <end position="142"/>
    </location>
    <ligand>
        <name>FMN</name>
        <dbReference type="ChEBI" id="CHEBI:58210"/>
    </ligand>
</feature>
<feature type="binding site" evidence="1">
    <location>
        <position position="186"/>
    </location>
    <ligand>
        <name>FMN</name>
        <dbReference type="ChEBI" id="CHEBI:58210"/>
    </ligand>
</feature>
<feature type="binding site" evidence="1">
    <location>
        <begin position="192"/>
        <end position="194"/>
    </location>
    <ligand>
        <name>substrate</name>
    </ligand>
</feature>
<feature type="binding site" evidence="1">
    <location>
        <position position="196"/>
    </location>
    <ligand>
        <name>FMN</name>
        <dbReference type="ChEBI" id="CHEBI:58210"/>
    </ligand>
</feature>
<accession>Q72PF1</accession>
<evidence type="ECO:0000255" key="1">
    <source>
        <dbReference type="HAMAP-Rule" id="MF_01629"/>
    </source>
</evidence>
<proteinExistence type="inferred from homology"/>
<dbReference type="EC" id="1.4.3.5" evidence="1"/>
<dbReference type="EMBL" id="AE016823">
    <property type="protein sequence ID" value="AAS71085.1"/>
    <property type="molecule type" value="Genomic_DNA"/>
</dbReference>
<dbReference type="RefSeq" id="WP_000371278.1">
    <property type="nucleotide sequence ID" value="NC_005823.1"/>
</dbReference>
<dbReference type="SMR" id="Q72PF1"/>
<dbReference type="GeneID" id="61142397"/>
<dbReference type="KEGG" id="lic:LIC_12520"/>
<dbReference type="HOGENOM" id="CLU_032263_2_2_12"/>
<dbReference type="UniPathway" id="UPA01068">
    <property type="reaction ID" value="UER00304"/>
</dbReference>
<dbReference type="UniPathway" id="UPA01068">
    <property type="reaction ID" value="UER00305"/>
</dbReference>
<dbReference type="Proteomes" id="UP000007037">
    <property type="component" value="Chromosome I"/>
</dbReference>
<dbReference type="GO" id="GO:0010181">
    <property type="term" value="F:FMN binding"/>
    <property type="evidence" value="ECO:0007669"/>
    <property type="project" value="UniProtKB-UniRule"/>
</dbReference>
<dbReference type="GO" id="GO:0004733">
    <property type="term" value="F:pyridoxamine phosphate oxidase activity"/>
    <property type="evidence" value="ECO:0007669"/>
    <property type="project" value="UniProtKB-UniRule"/>
</dbReference>
<dbReference type="GO" id="GO:0008615">
    <property type="term" value="P:pyridoxine biosynthetic process"/>
    <property type="evidence" value="ECO:0007669"/>
    <property type="project" value="UniProtKB-KW"/>
</dbReference>
<dbReference type="FunFam" id="2.30.110.10:FF:000005">
    <property type="entry name" value="NAD(P)H-hydrate epimerase"/>
    <property type="match status" value="1"/>
</dbReference>
<dbReference type="Gene3D" id="2.30.110.10">
    <property type="entry name" value="Electron Transport, Fmn-binding Protein, Chain A"/>
    <property type="match status" value="1"/>
</dbReference>
<dbReference type="HAMAP" id="MF_01629">
    <property type="entry name" value="PdxH"/>
    <property type="match status" value="1"/>
</dbReference>
<dbReference type="InterPro" id="IPR000659">
    <property type="entry name" value="Pyridox_Oxase"/>
</dbReference>
<dbReference type="InterPro" id="IPR019740">
    <property type="entry name" value="Pyridox_Oxase_CS"/>
</dbReference>
<dbReference type="InterPro" id="IPR011576">
    <property type="entry name" value="Pyridox_Oxase_N"/>
</dbReference>
<dbReference type="InterPro" id="IPR019576">
    <property type="entry name" value="Pyridoxamine_oxidase_dimer_C"/>
</dbReference>
<dbReference type="InterPro" id="IPR012349">
    <property type="entry name" value="Split_barrel_FMN-bd"/>
</dbReference>
<dbReference type="NCBIfam" id="TIGR00558">
    <property type="entry name" value="pdxH"/>
    <property type="match status" value="1"/>
</dbReference>
<dbReference type="NCBIfam" id="NF004231">
    <property type="entry name" value="PRK05679.1"/>
    <property type="match status" value="1"/>
</dbReference>
<dbReference type="PANTHER" id="PTHR10851:SF0">
    <property type="entry name" value="PYRIDOXINE-5'-PHOSPHATE OXIDASE"/>
    <property type="match status" value="1"/>
</dbReference>
<dbReference type="PANTHER" id="PTHR10851">
    <property type="entry name" value="PYRIDOXINE-5-PHOSPHATE OXIDASE"/>
    <property type="match status" value="1"/>
</dbReference>
<dbReference type="Pfam" id="PF10590">
    <property type="entry name" value="PNP_phzG_C"/>
    <property type="match status" value="1"/>
</dbReference>
<dbReference type="Pfam" id="PF01243">
    <property type="entry name" value="PNPOx_N"/>
    <property type="match status" value="1"/>
</dbReference>
<dbReference type="PIRSF" id="PIRSF000190">
    <property type="entry name" value="Pyd_amn-ph_oxd"/>
    <property type="match status" value="1"/>
</dbReference>
<dbReference type="SUPFAM" id="SSF50475">
    <property type="entry name" value="FMN-binding split barrel"/>
    <property type="match status" value="1"/>
</dbReference>
<dbReference type="PROSITE" id="PS01064">
    <property type="entry name" value="PYRIDOX_OXIDASE"/>
    <property type="match status" value="1"/>
</dbReference>